<gene>
    <name type="primary">TMA22</name>
    <name type="ORF">LELG_04257</name>
</gene>
<accession>A5E3R9</accession>
<proteinExistence type="inferred from homology"/>
<name>DENR_LODEL</name>
<comment type="subunit">
    <text evidence="1">Interacts with the 40S ribosomal subunit.</text>
</comment>
<comment type="subcellular location">
    <subcellularLocation>
        <location evidence="1">Cytoplasm</location>
    </subcellularLocation>
</comment>
<comment type="domain">
    <text>The SUI1 domain may be involved in RNA binding.</text>
</comment>
<comment type="similarity">
    <text evidence="3">Belongs to the DENR family.</text>
</comment>
<protein>
    <recommendedName>
        <fullName>Translation machinery-associated protein 22</fullName>
    </recommendedName>
</protein>
<dbReference type="EMBL" id="CH981529">
    <property type="protein sequence ID" value="EDK46077.1"/>
    <property type="molecule type" value="Genomic_DNA"/>
</dbReference>
<dbReference type="RefSeq" id="XP_001524286.1">
    <property type="nucleotide sequence ID" value="XM_001524236.1"/>
</dbReference>
<dbReference type="SMR" id="A5E3R9"/>
<dbReference type="FunCoup" id="A5E3R9">
    <property type="interactions" value="1173"/>
</dbReference>
<dbReference type="STRING" id="379508.A5E3R9"/>
<dbReference type="GeneID" id="5231576"/>
<dbReference type="KEGG" id="lel:PVL30_003985"/>
<dbReference type="VEuPathDB" id="FungiDB:LELG_04257"/>
<dbReference type="eggNOG" id="KOG3239">
    <property type="taxonomic scope" value="Eukaryota"/>
</dbReference>
<dbReference type="HOGENOM" id="CLU_073511_0_1_1"/>
<dbReference type="InParanoid" id="A5E3R9"/>
<dbReference type="OMA" id="EVFEIDM"/>
<dbReference type="OrthoDB" id="277199at2759"/>
<dbReference type="Proteomes" id="UP000001996">
    <property type="component" value="Unassembled WGS sequence"/>
</dbReference>
<dbReference type="GO" id="GO:0005737">
    <property type="term" value="C:cytoplasm"/>
    <property type="evidence" value="ECO:0007669"/>
    <property type="project" value="UniProtKB-SubCell"/>
</dbReference>
<dbReference type="GO" id="GO:1990904">
    <property type="term" value="C:ribonucleoprotein complex"/>
    <property type="evidence" value="ECO:0007669"/>
    <property type="project" value="UniProtKB-KW"/>
</dbReference>
<dbReference type="GO" id="GO:0005840">
    <property type="term" value="C:ribosome"/>
    <property type="evidence" value="ECO:0007669"/>
    <property type="project" value="UniProtKB-KW"/>
</dbReference>
<dbReference type="GO" id="GO:0003729">
    <property type="term" value="F:mRNA binding"/>
    <property type="evidence" value="ECO:0007669"/>
    <property type="project" value="TreeGrafter"/>
</dbReference>
<dbReference type="GO" id="GO:0003743">
    <property type="term" value="F:translation initiation factor activity"/>
    <property type="evidence" value="ECO:0007669"/>
    <property type="project" value="InterPro"/>
</dbReference>
<dbReference type="GO" id="GO:0001731">
    <property type="term" value="P:formation of translation preinitiation complex"/>
    <property type="evidence" value="ECO:0007669"/>
    <property type="project" value="TreeGrafter"/>
</dbReference>
<dbReference type="GO" id="GO:0002188">
    <property type="term" value="P:translation reinitiation"/>
    <property type="evidence" value="ECO:0007669"/>
    <property type="project" value="TreeGrafter"/>
</dbReference>
<dbReference type="CDD" id="cd11607">
    <property type="entry name" value="DENR_C"/>
    <property type="match status" value="1"/>
</dbReference>
<dbReference type="Gene3D" id="3.30.780.10">
    <property type="entry name" value="SUI1-like domain"/>
    <property type="match status" value="1"/>
</dbReference>
<dbReference type="InterPro" id="IPR050318">
    <property type="entry name" value="DENR/SUI1_TIF"/>
</dbReference>
<dbReference type="InterPro" id="IPR046447">
    <property type="entry name" value="DENR_C"/>
</dbReference>
<dbReference type="InterPro" id="IPR005873">
    <property type="entry name" value="DENR_eukaryotes"/>
</dbReference>
<dbReference type="InterPro" id="IPR048517">
    <property type="entry name" value="DENR_N"/>
</dbReference>
<dbReference type="InterPro" id="IPR001950">
    <property type="entry name" value="SUI1"/>
</dbReference>
<dbReference type="InterPro" id="IPR036877">
    <property type="entry name" value="SUI1_dom_sf"/>
</dbReference>
<dbReference type="NCBIfam" id="TIGR01159">
    <property type="entry name" value="DRP1"/>
    <property type="match status" value="1"/>
</dbReference>
<dbReference type="PANTHER" id="PTHR12789:SF0">
    <property type="entry name" value="DENSITY-REGULATED PROTEIN"/>
    <property type="match status" value="1"/>
</dbReference>
<dbReference type="PANTHER" id="PTHR12789">
    <property type="entry name" value="DENSITY-REGULATED PROTEIN HOMOLOG"/>
    <property type="match status" value="1"/>
</dbReference>
<dbReference type="Pfam" id="PF21023">
    <property type="entry name" value="DENR_N"/>
    <property type="match status" value="1"/>
</dbReference>
<dbReference type="Pfam" id="PF01253">
    <property type="entry name" value="SUI1"/>
    <property type="match status" value="1"/>
</dbReference>
<dbReference type="SUPFAM" id="SSF55159">
    <property type="entry name" value="eIF1-like"/>
    <property type="match status" value="1"/>
</dbReference>
<dbReference type="PROSITE" id="PS50296">
    <property type="entry name" value="SUI1"/>
    <property type="match status" value="1"/>
</dbReference>
<feature type="chain" id="PRO_0000320444" description="Translation machinery-associated protein 22">
    <location>
        <begin position="1"/>
        <end position="196"/>
    </location>
</feature>
<feature type="domain" description="SUI1" evidence="2">
    <location>
        <begin position="111"/>
        <end position="182"/>
    </location>
</feature>
<reference key="1">
    <citation type="journal article" date="2009" name="Nature">
        <title>Evolution of pathogenicity and sexual reproduction in eight Candida genomes.</title>
        <authorList>
            <person name="Butler G."/>
            <person name="Rasmussen M.D."/>
            <person name="Lin M.F."/>
            <person name="Santos M.A.S."/>
            <person name="Sakthikumar S."/>
            <person name="Munro C.A."/>
            <person name="Rheinbay E."/>
            <person name="Grabherr M."/>
            <person name="Forche A."/>
            <person name="Reedy J.L."/>
            <person name="Agrafioti I."/>
            <person name="Arnaud M.B."/>
            <person name="Bates S."/>
            <person name="Brown A.J.P."/>
            <person name="Brunke S."/>
            <person name="Costanzo M.C."/>
            <person name="Fitzpatrick D.A."/>
            <person name="de Groot P.W.J."/>
            <person name="Harris D."/>
            <person name="Hoyer L.L."/>
            <person name="Hube B."/>
            <person name="Klis F.M."/>
            <person name="Kodira C."/>
            <person name="Lennard N."/>
            <person name="Logue M.E."/>
            <person name="Martin R."/>
            <person name="Neiman A.M."/>
            <person name="Nikolaou E."/>
            <person name="Quail M.A."/>
            <person name="Quinn J."/>
            <person name="Santos M.C."/>
            <person name="Schmitzberger F.F."/>
            <person name="Sherlock G."/>
            <person name="Shah P."/>
            <person name="Silverstein K.A.T."/>
            <person name="Skrzypek M.S."/>
            <person name="Soll D."/>
            <person name="Staggs R."/>
            <person name="Stansfield I."/>
            <person name="Stumpf M.P.H."/>
            <person name="Sudbery P.E."/>
            <person name="Srikantha T."/>
            <person name="Zeng Q."/>
            <person name="Berman J."/>
            <person name="Berriman M."/>
            <person name="Heitman J."/>
            <person name="Gow N.A.R."/>
            <person name="Lorenz M.C."/>
            <person name="Birren B.W."/>
            <person name="Kellis M."/>
            <person name="Cuomo C.A."/>
        </authorList>
    </citation>
    <scope>NUCLEOTIDE SEQUENCE [LARGE SCALE GENOMIC DNA]</scope>
    <source>
        <strain>ATCC 11503 / BCRC 21390 / CBS 2605 / JCM 1781 / NBRC 1676 / NRRL YB-4239</strain>
    </source>
</reference>
<keyword id="KW-0963">Cytoplasm</keyword>
<keyword id="KW-1185">Reference proteome</keyword>
<keyword id="KW-0687">Ribonucleoprotein</keyword>
<keyword id="KW-0689">Ribosomal protein</keyword>
<sequence>MTELAPKQITYCGVCTWPLEFCEFGISLPRCQSWLASKHPELFSTVYPNTPNPESVSASAPSADELASKLELATLSSDPKEAKIQAELLKKQAKHQLKQEKELTKKQNSKIIIKRIERNKRKHIISISGLEVFQIEPKKLAKTFASKFATGASVVKNAEKLDEVVVQGDVSDEAKEYIEKLLKEQEGLENVKVEPS</sequence>
<organism>
    <name type="scientific">Lodderomyces elongisporus (strain ATCC 11503 / CBS 2605 / JCM 1781 / NBRC 1676 / NRRL YB-4239)</name>
    <name type="common">Yeast</name>
    <name type="synonym">Saccharomyces elongisporus</name>
    <dbReference type="NCBI Taxonomy" id="379508"/>
    <lineage>
        <taxon>Eukaryota</taxon>
        <taxon>Fungi</taxon>
        <taxon>Dikarya</taxon>
        <taxon>Ascomycota</taxon>
        <taxon>Saccharomycotina</taxon>
        <taxon>Pichiomycetes</taxon>
        <taxon>Debaryomycetaceae</taxon>
        <taxon>Candida/Lodderomyces clade</taxon>
        <taxon>Lodderomyces</taxon>
    </lineage>
</organism>
<evidence type="ECO:0000250" key="1"/>
<evidence type="ECO:0000255" key="2">
    <source>
        <dbReference type="PROSITE-ProRule" id="PRU00200"/>
    </source>
</evidence>
<evidence type="ECO:0000305" key="3"/>